<protein>
    <recommendedName>
        <fullName evidence="1">Ribosome maturation factor RimM</fullName>
    </recommendedName>
</protein>
<proteinExistence type="inferred from homology"/>
<feature type="chain" id="PRO_0000244174" description="Ribosome maturation factor RimM">
    <location>
        <begin position="1"/>
        <end position="172"/>
    </location>
</feature>
<feature type="domain" description="PRC barrel" evidence="1">
    <location>
        <begin position="96"/>
        <end position="168"/>
    </location>
</feature>
<organism>
    <name type="scientific">Streptococcus agalactiae serotype Ia (strain ATCC 27591 / A909 / CDC SS700)</name>
    <dbReference type="NCBI Taxonomy" id="205921"/>
    <lineage>
        <taxon>Bacteria</taxon>
        <taxon>Bacillati</taxon>
        <taxon>Bacillota</taxon>
        <taxon>Bacilli</taxon>
        <taxon>Lactobacillales</taxon>
        <taxon>Streptococcaceae</taxon>
        <taxon>Streptococcus</taxon>
    </lineage>
</organism>
<dbReference type="EMBL" id="CP000114">
    <property type="protein sequence ID" value="ABA45465.1"/>
    <property type="molecule type" value="Genomic_DNA"/>
</dbReference>
<dbReference type="RefSeq" id="WP_000455622.1">
    <property type="nucleotide sequence ID" value="NC_007432.1"/>
</dbReference>
<dbReference type="SMR" id="Q3K0F7"/>
<dbReference type="KEGG" id="sak:SAK_1386"/>
<dbReference type="HOGENOM" id="CLU_077636_3_1_9"/>
<dbReference type="GO" id="GO:0005737">
    <property type="term" value="C:cytoplasm"/>
    <property type="evidence" value="ECO:0007669"/>
    <property type="project" value="UniProtKB-SubCell"/>
</dbReference>
<dbReference type="GO" id="GO:0005840">
    <property type="term" value="C:ribosome"/>
    <property type="evidence" value="ECO:0007669"/>
    <property type="project" value="InterPro"/>
</dbReference>
<dbReference type="GO" id="GO:0043022">
    <property type="term" value="F:ribosome binding"/>
    <property type="evidence" value="ECO:0007669"/>
    <property type="project" value="InterPro"/>
</dbReference>
<dbReference type="GO" id="GO:0042274">
    <property type="term" value="P:ribosomal small subunit biogenesis"/>
    <property type="evidence" value="ECO:0007669"/>
    <property type="project" value="UniProtKB-UniRule"/>
</dbReference>
<dbReference type="GO" id="GO:0006364">
    <property type="term" value="P:rRNA processing"/>
    <property type="evidence" value="ECO:0007669"/>
    <property type="project" value="UniProtKB-UniRule"/>
</dbReference>
<dbReference type="Gene3D" id="2.30.30.240">
    <property type="entry name" value="PRC-barrel domain"/>
    <property type="match status" value="1"/>
</dbReference>
<dbReference type="Gene3D" id="2.40.30.60">
    <property type="entry name" value="RimM"/>
    <property type="match status" value="1"/>
</dbReference>
<dbReference type="HAMAP" id="MF_00014">
    <property type="entry name" value="Ribosome_mat_RimM"/>
    <property type="match status" value="1"/>
</dbReference>
<dbReference type="InterPro" id="IPR027275">
    <property type="entry name" value="PRC-brl_dom"/>
</dbReference>
<dbReference type="InterPro" id="IPR011033">
    <property type="entry name" value="PRC_barrel-like_sf"/>
</dbReference>
<dbReference type="InterPro" id="IPR011961">
    <property type="entry name" value="RimM"/>
</dbReference>
<dbReference type="InterPro" id="IPR002676">
    <property type="entry name" value="RimM_N"/>
</dbReference>
<dbReference type="InterPro" id="IPR036976">
    <property type="entry name" value="RimM_N_sf"/>
</dbReference>
<dbReference type="InterPro" id="IPR009000">
    <property type="entry name" value="Transl_B-barrel_sf"/>
</dbReference>
<dbReference type="NCBIfam" id="TIGR02273">
    <property type="entry name" value="16S_RimM"/>
    <property type="match status" value="1"/>
</dbReference>
<dbReference type="PANTHER" id="PTHR33692">
    <property type="entry name" value="RIBOSOME MATURATION FACTOR RIMM"/>
    <property type="match status" value="1"/>
</dbReference>
<dbReference type="PANTHER" id="PTHR33692:SF1">
    <property type="entry name" value="RIBOSOME MATURATION FACTOR RIMM"/>
    <property type="match status" value="1"/>
</dbReference>
<dbReference type="Pfam" id="PF05239">
    <property type="entry name" value="PRC"/>
    <property type="match status" value="1"/>
</dbReference>
<dbReference type="Pfam" id="PF01782">
    <property type="entry name" value="RimM"/>
    <property type="match status" value="1"/>
</dbReference>
<dbReference type="SUPFAM" id="SSF50346">
    <property type="entry name" value="PRC-barrel domain"/>
    <property type="match status" value="1"/>
</dbReference>
<dbReference type="SUPFAM" id="SSF50447">
    <property type="entry name" value="Translation proteins"/>
    <property type="match status" value="1"/>
</dbReference>
<keyword id="KW-0143">Chaperone</keyword>
<keyword id="KW-0963">Cytoplasm</keyword>
<keyword id="KW-0690">Ribosome biogenesis</keyword>
<keyword id="KW-0698">rRNA processing</keyword>
<accession>Q3K0F7</accession>
<evidence type="ECO:0000255" key="1">
    <source>
        <dbReference type="HAMAP-Rule" id="MF_00014"/>
    </source>
</evidence>
<sequence length="172" mass="19955">MEYFNVGKIVNTQGLQGEMRVLSVTDFVEERFKKGQVLALFDEKNQFVMDIEIASHRKQKNFDIIKFKGMYHINDIEKYKGFTLKVAEDQLSDLKDGEFYYHEIIGLGVYEGEELIGKIKEILQPGANDVWVVERHGKRDLLLPYIPPVVLEVDLSNQRVQVELMEGLDDED</sequence>
<name>RIMM_STRA1</name>
<gene>
    <name evidence="1" type="primary">rimM</name>
    <name type="ordered locus">SAK_1386</name>
</gene>
<comment type="function">
    <text evidence="1">An accessory protein needed during the final step in the assembly of 30S ribosomal subunit, possibly for assembly of the head region. Essential for efficient processing of 16S rRNA. May be needed both before and after RbfA during the maturation of 16S rRNA. It has affinity for free ribosomal 30S subunits but not for 70S ribosomes.</text>
</comment>
<comment type="subunit">
    <text evidence="1">Binds ribosomal protein uS19.</text>
</comment>
<comment type="subcellular location">
    <subcellularLocation>
        <location evidence="1">Cytoplasm</location>
    </subcellularLocation>
</comment>
<comment type="domain">
    <text evidence="1">The PRC barrel domain binds ribosomal protein uS19.</text>
</comment>
<comment type="similarity">
    <text evidence="1">Belongs to the RimM family.</text>
</comment>
<reference key="1">
    <citation type="journal article" date="2005" name="Proc. Natl. Acad. Sci. U.S.A.">
        <title>Genome analysis of multiple pathogenic isolates of Streptococcus agalactiae: implications for the microbial 'pan-genome'.</title>
        <authorList>
            <person name="Tettelin H."/>
            <person name="Masignani V."/>
            <person name="Cieslewicz M.J."/>
            <person name="Donati C."/>
            <person name="Medini D."/>
            <person name="Ward N.L."/>
            <person name="Angiuoli S.V."/>
            <person name="Crabtree J."/>
            <person name="Jones A.L."/>
            <person name="Durkin A.S."/>
            <person name="DeBoy R.T."/>
            <person name="Davidsen T.M."/>
            <person name="Mora M."/>
            <person name="Scarselli M."/>
            <person name="Margarit y Ros I."/>
            <person name="Peterson J.D."/>
            <person name="Hauser C.R."/>
            <person name="Sundaram J.P."/>
            <person name="Nelson W.C."/>
            <person name="Madupu R."/>
            <person name="Brinkac L.M."/>
            <person name="Dodson R.J."/>
            <person name="Rosovitz M.J."/>
            <person name="Sullivan S.A."/>
            <person name="Daugherty S.C."/>
            <person name="Haft D.H."/>
            <person name="Selengut J."/>
            <person name="Gwinn M.L."/>
            <person name="Zhou L."/>
            <person name="Zafar N."/>
            <person name="Khouri H."/>
            <person name="Radune D."/>
            <person name="Dimitrov G."/>
            <person name="Watkins K."/>
            <person name="O'Connor K.J."/>
            <person name="Smith S."/>
            <person name="Utterback T.R."/>
            <person name="White O."/>
            <person name="Rubens C.E."/>
            <person name="Grandi G."/>
            <person name="Madoff L.C."/>
            <person name="Kasper D.L."/>
            <person name="Telford J.L."/>
            <person name="Wessels M.R."/>
            <person name="Rappuoli R."/>
            <person name="Fraser C.M."/>
        </authorList>
    </citation>
    <scope>NUCLEOTIDE SEQUENCE [LARGE SCALE GENOMIC DNA]</scope>
    <source>
        <strain>ATCC 27591 / A909 / CDC SS700</strain>
    </source>
</reference>